<comment type="subunit">
    <text evidence="4">Interacts with VTC2, VTC5 and BLH10.</text>
</comment>
<comment type="alternative products">
    <event type="alternative splicing"/>
    <isoform>
        <id>O64511-1</id>
        <name>1</name>
        <name>PLPB</name>
        <sequence type="displayed"/>
    </isoform>
    <isoform>
        <id>O64511-2</id>
        <name>2</name>
        <name>PLPA</name>
        <sequence type="described" ref="VSP_022378"/>
    </isoform>
    <isoform>
        <id>O64511-3</id>
        <name>3</name>
        <name>PLPC</name>
        <sequence type="described" ref="VSP_022378 VSP_022379 VSP_022380"/>
    </isoform>
</comment>
<comment type="PTM">
    <text evidence="1">FMN binds covalently to cysteine after exposure to blue light and is reversed in the dark.</text>
</comment>
<comment type="miscellaneous">
    <molecule>Isoform 2</molecule>
    <text evidence="6">May be due to competing acceptor splice site.</text>
</comment>
<comment type="caution">
    <text evidence="7">Was originally thought to contain a F-box domain.</text>
</comment>
<comment type="caution">
    <text evidence="6">Contains Gly-74 instead of the conserved Cys required for the covalent attachment of FMN in the first PAS domain.</text>
</comment>
<evidence type="ECO:0000250" key="1"/>
<evidence type="ECO:0000255" key="2">
    <source>
        <dbReference type="PROSITE-ProRule" id="PRU00140"/>
    </source>
</evidence>
<evidence type="ECO:0000255" key="3">
    <source>
        <dbReference type="PROSITE-ProRule" id="PRU00141"/>
    </source>
</evidence>
<evidence type="ECO:0000269" key="4">
    <source>
    </source>
</evidence>
<evidence type="ECO:0000303" key="5">
    <source ref="1"/>
</evidence>
<evidence type="ECO:0000305" key="6"/>
<evidence type="ECO:0000305" key="7">
    <source>
    </source>
</evidence>
<protein>
    <recommendedName>
        <fullName>Protein TWIN LOV 1</fullName>
    </recommendedName>
</protein>
<accession>O64511</accession>
<accession>Q3EC83</accession>
<accession>Q8W419</accession>
<accession>Q93VM4</accession>
<organism>
    <name type="scientific">Arabidopsis thaliana</name>
    <name type="common">Mouse-ear cress</name>
    <dbReference type="NCBI Taxonomy" id="3702"/>
    <lineage>
        <taxon>Eukaryota</taxon>
        <taxon>Viridiplantae</taxon>
        <taxon>Streptophyta</taxon>
        <taxon>Embryophyta</taxon>
        <taxon>Tracheophyta</taxon>
        <taxon>Spermatophyta</taxon>
        <taxon>Magnoliopsida</taxon>
        <taxon>eudicotyledons</taxon>
        <taxon>Gunneridae</taxon>
        <taxon>Pentapetalae</taxon>
        <taxon>rosids</taxon>
        <taxon>malvids</taxon>
        <taxon>Brassicales</taxon>
        <taxon>Brassicaceae</taxon>
        <taxon>Camelineae</taxon>
        <taxon>Arabidopsis</taxon>
    </lineage>
</organism>
<dbReference type="EMBL" id="AB038798">
    <property type="protein sequence ID" value="BAB83170.1"/>
    <property type="molecule type" value="mRNA"/>
</dbReference>
<dbReference type="EMBL" id="AC002521">
    <property type="protein sequence ID" value="AAC05351.2"/>
    <property type="molecule type" value="Genomic_DNA"/>
</dbReference>
<dbReference type="EMBL" id="CP002685">
    <property type="protein sequence ID" value="AEC05613.1"/>
    <property type="molecule type" value="Genomic_DNA"/>
</dbReference>
<dbReference type="EMBL" id="CP002685">
    <property type="protein sequence ID" value="AEC05614.1"/>
    <property type="molecule type" value="Genomic_DNA"/>
</dbReference>
<dbReference type="EMBL" id="AY045642">
    <property type="protein sequence ID" value="AAK74000.1"/>
    <property type="molecule type" value="mRNA"/>
</dbReference>
<dbReference type="EMBL" id="AY058232">
    <property type="protein sequence ID" value="AAL15406.1"/>
    <property type="molecule type" value="mRNA"/>
</dbReference>
<dbReference type="PIR" id="T00857">
    <property type="entry name" value="T00857"/>
</dbReference>
<dbReference type="RefSeq" id="NP_565288.1">
    <molecule id="O64511-1"/>
    <property type="nucleotide sequence ID" value="NM_126326.5"/>
</dbReference>
<dbReference type="RefSeq" id="NP_849928.1">
    <molecule id="O64511-2"/>
    <property type="nucleotide sequence ID" value="NM_179597.1"/>
</dbReference>
<dbReference type="SMR" id="O64511"/>
<dbReference type="BioGRID" id="202">
    <property type="interactions" value="2"/>
</dbReference>
<dbReference type="FunCoup" id="O64511">
    <property type="interactions" value="309"/>
</dbReference>
<dbReference type="IntAct" id="O64511">
    <property type="interactions" value="3"/>
</dbReference>
<dbReference type="STRING" id="3702.O64511"/>
<dbReference type="iPTMnet" id="O64511"/>
<dbReference type="PaxDb" id="3702-AT2G02710.1"/>
<dbReference type="ProteomicsDB" id="232460">
    <molecule id="O64511-1"/>
</dbReference>
<dbReference type="EnsemblPlants" id="AT2G02710.1">
    <molecule id="O64511-1"/>
    <property type="protein sequence ID" value="AT2G02710.1"/>
    <property type="gene ID" value="AT2G02710"/>
</dbReference>
<dbReference type="EnsemblPlants" id="AT2G02710.2">
    <molecule id="O64511-2"/>
    <property type="protein sequence ID" value="AT2G02710.2"/>
    <property type="gene ID" value="AT2G02710"/>
</dbReference>
<dbReference type="GeneID" id="814800"/>
<dbReference type="Gramene" id="AT2G02710.1">
    <molecule id="O64511-1"/>
    <property type="protein sequence ID" value="AT2G02710.1"/>
    <property type="gene ID" value="AT2G02710"/>
</dbReference>
<dbReference type="Gramene" id="AT2G02710.2">
    <molecule id="O64511-2"/>
    <property type="protein sequence ID" value="AT2G02710.2"/>
    <property type="gene ID" value="AT2G02710"/>
</dbReference>
<dbReference type="KEGG" id="ath:AT2G02710"/>
<dbReference type="Araport" id="AT2G02710"/>
<dbReference type="TAIR" id="AT2G02710">
    <property type="gene designation" value="PLPB"/>
</dbReference>
<dbReference type="eggNOG" id="ENOG502QPWT">
    <property type="taxonomic scope" value="Eukaryota"/>
</dbReference>
<dbReference type="InParanoid" id="O64511"/>
<dbReference type="OMA" id="QIEEGCK"/>
<dbReference type="OrthoDB" id="447251at2759"/>
<dbReference type="PhylomeDB" id="O64511"/>
<dbReference type="PRO" id="PR:O64511"/>
<dbReference type="Proteomes" id="UP000006548">
    <property type="component" value="Chromosome 2"/>
</dbReference>
<dbReference type="ExpressionAtlas" id="O64511">
    <property type="expression patterns" value="baseline and differential"/>
</dbReference>
<dbReference type="GO" id="GO:0009881">
    <property type="term" value="F:photoreceptor activity"/>
    <property type="evidence" value="ECO:0007669"/>
    <property type="project" value="UniProtKB-KW"/>
</dbReference>
<dbReference type="GO" id="GO:0009637">
    <property type="term" value="P:response to blue light"/>
    <property type="evidence" value="ECO:0007669"/>
    <property type="project" value="UniProtKB-ARBA"/>
</dbReference>
<dbReference type="CDD" id="cd00130">
    <property type="entry name" value="PAS"/>
    <property type="match status" value="2"/>
</dbReference>
<dbReference type="FunFam" id="3.30.450.20:FF:000100">
    <property type="entry name" value="Protein TWIN LOV 1"/>
    <property type="match status" value="1"/>
</dbReference>
<dbReference type="FunFam" id="3.30.450.20:FF:000080">
    <property type="entry name" value="protein TWIN LOV 1"/>
    <property type="match status" value="1"/>
</dbReference>
<dbReference type="Gene3D" id="3.30.450.20">
    <property type="entry name" value="PAS domain"/>
    <property type="match status" value="2"/>
</dbReference>
<dbReference type="InterPro" id="IPR001610">
    <property type="entry name" value="PAC"/>
</dbReference>
<dbReference type="InterPro" id="IPR000014">
    <property type="entry name" value="PAS"/>
</dbReference>
<dbReference type="InterPro" id="IPR000700">
    <property type="entry name" value="PAS-assoc_C"/>
</dbReference>
<dbReference type="InterPro" id="IPR035965">
    <property type="entry name" value="PAS-like_dom_sf"/>
</dbReference>
<dbReference type="NCBIfam" id="TIGR00229">
    <property type="entry name" value="sensory_box"/>
    <property type="match status" value="2"/>
</dbReference>
<dbReference type="PANTHER" id="PTHR47429">
    <property type="entry name" value="PROTEIN TWIN LOV 1"/>
    <property type="match status" value="1"/>
</dbReference>
<dbReference type="PANTHER" id="PTHR47429:SF2">
    <property type="entry name" value="PROTEIN TWIN LOV 1"/>
    <property type="match status" value="1"/>
</dbReference>
<dbReference type="Pfam" id="PF13426">
    <property type="entry name" value="PAS_9"/>
    <property type="match status" value="2"/>
</dbReference>
<dbReference type="SMART" id="SM00086">
    <property type="entry name" value="PAC"/>
    <property type="match status" value="2"/>
</dbReference>
<dbReference type="SMART" id="SM00091">
    <property type="entry name" value="PAS"/>
    <property type="match status" value="2"/>
</dbReference>
<dbReference type="SUPFAM" id="SSF55785">
    <property type="entry name" value="PYP-like sensor domain (PAS domain)"/>
    <property type="match status" value="2"/>
</dbReference>
<dbReference type="PROSITE" id="PS50113">
    <property type="entry name" value="PAC"/>
    <property type="match status" value="2"/>
</dbReference>
<dbReference type="PROSITE" id="PS50112">
    <property type="entry name" value="PAS"/>
    <property type="match status" value="2"/>
</dbReference>
<feature type="chain" id="PRO_0000272267" description="Protein TWIN LOV 1">
    <location>
        <begin position="1"/>
        <end position="399"/>
    </location>
</feature>
<feature type="domain" description="PAS 1" evidence="2">
    <location>
        <begin position="26"/>
        <end position="97"/>
    </location>
</feature>
<feature type="domain" description="PAC 1" evidence="3">
    <location>
        <begin position="98"/>
        <end position="153"/>
    </location>
</feature>
<feature type="domain" description="PAS 2" evidence="2">
    <location>
        <begin position="249"/>
        <end position="320"/>
    </location>
</feature>
<feature type="domain" description="PAC 2" evidence="3">
    <location>
        <begin position="320"/>
        <end position="376"/>
    </location>
</feature>
<feature type="modified residue" description="S-4a-FMN cysteine" evidence="1">
    <location>
        <position position="296"/>
    </location>
</feature>
<feature type="splice variant" id="VSP_022378" description="In isoform 2 and isoform 3." evidence="5">
    <location>
        <begin position="330"/>
        <end position="331"/>
    </location>
</feature>
<feature type="splice variant" id="VSP_022379" description="In isoform 3." evidence="6">
    <original>TAYFVGV</original>
    <variation>HILWVFK</variation>
    <location>
        <begin position="354"/>
        <end position="360"/>
    </location>
</feature>
<feature type="splice variant" id="VSP_022380" description="In isoform 3." evidence="6">
    <location>
        <begin position="361"/>
        <end position="399"/>
    </location>
</feature>
<reference key="1">
    <citation type="submission" date="2000-02" db="EMBL/GenBank/DDBJ databases">
        <title>TLP1.</title>
        <authorList>
            <person name="Kiyosue T."/>
        </authorList>
    </citation>
    <scope>NUCLEOTIDE SEQUENCE [MRNA] (ISOFORM 2)</scope>
</reference>
<reference key="2">
    <citation type="journal article" date="1999" name="Nature">
        <title>Sequence and analysis of chromosome 2 of the plant Arabidopsis thaliana.</title>
        <authorList>
            <person name="Lin X."/>
            <person name="Kaul S."/>
            <person name="Rounsley S.D."/>
            <person name="Shea T.P."/>
            <person name="Benito M.-I."/>
            <person name="Town C.D."/>
            <person name="Fujii C.Y."/>
            <person name="Mason T.M."/>
            <person name="Bowman C.L."/>
            <person name="Barnstead M.E."/>
            <person name="Feldblyum T.V."/>
            <person name="Buell C.R."/>
            <person name="Ketchum K.A."/>
            <person name="Lee J.J."/>
            <person name="Ronning C.M."/>
            <person name="Koo H.L."/>
            <person name="Moffat K.S."/>
            <person name="Cronin L.A."/>
            <person name="Shen M."/>
            <person name="Pai G."/>
            <person name="Van Aken S."/>
            <person name="Umayam L."/>
            <person name="Tallon L.J."/>
            <person name="Gill J.E."/>
            <person name="Adams M.D."/>
            <person name="Carrera A.J."/>
            <person name="Creasy T.H."/>
            <person name="Goodman H.M."/>
            <person name="Somerville C.R."/>
            <person name="Copenhaver G.P."/>
            <person name="Preuss D."/>
            <person name="Nierman W.C."/>
            <person name="White O."/>
            <person name="Eisen J.A."/>
            <person name="Salzberg S.L."/>
            <person name="Fraser C.M."/>
            <person name="Venter J.C."/>
        </authorList>
    </citation>
    <scope>NUCLEOTIDE SEQUENCE [LARGE SCALE GENOMIC DNA]</scope>
    <source>
        <strain>cv. Columbia</strain>
    </source>
</reference>
<reference key="3">
    <citation type="journal article" date="2017" name="Plant J.">
        <title>Araport11: a complete reannotation of the Arabidopsis thaliana reference genome.</title>
        <authorList>
            <person name="Cheng C.Y."/>
            <person name="Krishnakumar V."/>
            <person name="Chan A.P."/>
            <person name="Thibaud-Nissen F."/>
            <person name="Schobel S."/>
            <person name="Town C.D."/>
        </authorList>
    </citation>
    <scope>GENOME REANNOTATION</scope>
    <source>
        <strain>cv. Columbia</strain>
    </source>
</reference>
<reference key="4">
    <citation type="journal article" date="2003" name="Science">
        <title>Empirical analysis of transcriptional activity in the Arabidopsis genome.</title>
        <authorList>
            <person name="Yamada K."/>
            <person name="Lim J."/>
            <person name="Dale J.M."/>
            <person name="Chen H."/>
            <person name="Shinn P."/>
            <person name="Palm C.J."/>
            <person name="Southwick A.M."/>
            <person name="Wu H.C."/>
            <person name="Kim C.J."/>
            <person name="Nguyen M."/>
            <person name="Pham P.K."/>
            <person name="Cheuk R.F."/>
            <person name="Karlin-Newmann G."/>
            <person name="Liu S.X."/>
            <person name="Lam B."/>
            <person name="Sakano H."/>
            <person name="Wu T."/>
            <person name="Yu G."/>
            <person name="Miranda M."/>
            <person name="Quach H.L."/>
            <person name="Tripp M."/>
            <person name="Chang C.H."/>
            <person name="Lee J.M."/>
            <person name="Toriumi M.J."/>
            <person name="Chan M.M."/>
            <person name="Tang C.C."/>
            <person name="Onodera C.S."/>
            <person name="Deng J.M."/>
            <person name="Akiyama K."/>
            <person name="Ansari Y."/>
            <person name="Arakawa T."/>
            <person name="Banh J."/>
            <person name="Banno F."/>
            <person name="Bowser L."/>
            <person name="Brooks S.Y."/>
            <person name="Carninci P."/>
            <person name="Chao Q."/>
            <person name="Choy N."/>
            <person name="Enju A."/>
            <person name="Goldsmith A.D."/>
            <person name="Gurjal M."/>
            <person name="Hansen N.F."/>
            <person name="Hayashizaki Y."/>
            <person name="Johnson-Hopson C."/>
            <person name="Hsuan V.W."/>
            <person name="Iida K."/>
            <person name="Karnes M."/>
            <person name="Khan S."/>
            <person name="Koesema E."/>
            <person name="Ishida J."/>
            <person name="Jiang P.X."/>
            <person name="Jones T."/>
            <person name="Kawai J."/>
            <person name="Kamiya A."/>
            <person name="Meyers C."/>
            <person name="Nakajima M."/>
            <person name="Narusaka M."/>
            <person name="Seki M."/>
            <person name="Sakurai T."/>
            <person name="Satou M."/>
            <person name="Tamse R."/>
            <person name="Vaysberg M."/>
            <person name="Wallender E.K."/>
            <person name="Wong C."/>
            <person name="Yamamura Y."/>
            <person name="Yuan S."/>
            <person name="Shinozaki K."/>
            <person name="Davis R.W."/>
            <person name="Theologis A."/>
            <person name="Ecker J.R."/>
        </authorList>
    </citation>
    <scope>NUCLEOTIDE SEQUENCE [LARGE SCALE MRNA] (ISOFORM 1)</scope>
    <source>
        <strain>cv. Columbia</strain>
    </source>
</reference>
<reference key="5">
    <citation type="journal article" date="2000" name="Trends Plant Sci.">
        <title>F-box proteins in Arabidopsis.</title>
        <authorList>
            <person name="Xiao W."/>
            <person name="Jang J.-C."/>
        </authorList>
    </citation>
    <scope>GENE FAMILY</scope>
    <scope>NOMENCLATURE</scope>
</reference>
<reference key="6">
    <citation type="journal article" date="2008" name="J. Plant Res.">
        <title>Blue light diminishes interaction of PAS/LOV proteins, putative blue light receptors in Arabidopsis thaliana, with their interacting partners.</title>
        <authorList>
            <person name="Ogura Y."/>
            <person name="Komatsu A."/>
            <person name="Zikihara K."/>
            <person name="Nanjo T."/>
            <person name="Tokutomi S."/>
            <person name="Wada M."/>
            <person name="Kiyosue T."/>
        </authorList>
    </citation>
    <scope>INTERACTION WITH VTC2; VTC5 AND BLH10</scope>
</reference>
<name>TLOV1_ARATH</name>
<proteinExistence type="evidence at protein level"/>
<gene>
    <name type="primary">TLP1</name>
    <name type="synonym">FBX4</name>
    <name type="synonym">PLP</name>
    <name type="ordered locus">At2g02710</name>
    <name type="ORF">T20F6.15</name>
</gene>
<keyword id="KW-0025">Alternative splicing</keyword>
<keyword id="KW-0157">Chromophore</keyword>
<keyword id="KW-0285">Flavoprotein</keyword>
<keyword id="KW-0288">FMN</keyword>
<keyword id="KW-0600">Photoreceptor protein</keyword>
<keyword id="KW-0675">Receptor</keyword>
<keyword id="KW-1185">Reference proteome</keyword>
<keyword id="KW-0677">Repeat</keyword>
<keyword id="KW-0716">Sensory transduction</keyword>
<sequence length="399" mass="44890">MSLTKSSESVFTEEEEEDSFSGRYTLWIKEALEELPHNFTITDPFISGHPIVFASLGFLKMTGYSREEVIGRNGKVFQGPKTNRRSIMEIREAIREERSVQVSLLNYRKSGSPFWMLFHMCPVFGKDDGKVTNFVAVQVPISGREHHRKKLRNVGDLSSDTSPTFGSCRREVCFGNFVCQDRALPVECDDDEQGLEDWEQCEASESEKLKATEAINNVLSILVHYSELSGRLVCGKRYCLRGVDCLSSSLVISLGRIKQSFVLTNPCLPDMPIIYASDAFLTLTGYKRQEVLGQNCRFLSGVDTDSSVLYEMKECILKGQSCTVQILNYSNRKDKSSFWNLLHISPVRNASGKTAYFVGVQVEASCRNTEIKELRPETRQLSVVGAVRVAVRSSLMVTC</sequence>